<name>UDG_STRP8</name>
<sequence length="402" mass="45483">MKIAVAGSGYVGLSLGVLLSLQNEVTIVDILPSKVDKINNGLSPIQDEYIEYYLKSKQLSIKATLDSKAAYKEAELVIIATPTNYNSRINYFDTQHVETVIKEVLSVNSHATLIIKSTIPIGFITEMRQKFQTDRIIFSPEFLRESKALYDNLYPSRIIVSCEENDSPKVKADAEKFALLLKSAAKKNNVPVLIMGASEAEAVKLFANTYLALRVAYFNELDTYAESRKLNSHMIIQGISYDDRIGMHYNNPSFGYGGYCLPKDTKQLLANYNNIPQTLIEAIVSSNNVRKSYIAKQIINVLKEQESPVKVVGVYRLIMKSNSDNFRESAIKDVIDILKSKDIKIIIYEPMLNKLESEDQSVLVNDLENFKKQANIIVTNRYDNELQDVKNKVYSRDIFGRD</sequence>
<feature type="chain" id="PRO_0000074058" description="UDP-glucose 6-dehydrogenase">
    <location>
        <begin position="1"/>
        <end position="402"/>
    </location>
</feature>
<feature type="active site" description="Nucleophile" evidence="2">
    <location>
        <position position="260"/>
    </location>
</feature>
<feature type="binding site" evidence="3">
    <location>
        <begin position="2"/>
        <end position="19"/>
    </location>
    <ligand>
        <name>NAD(+)</name>
        <dbReference type="ChEBI" id="CHEBI:57540"/>
    </ligand>
</feature>
<feature type="binding site" evidence="2">
    <location>
        <position position="11"/>
    </location>
    <ligand>
        <name>NAD(+)</name>
        <dbReference type="ChEBI" id="CHEBI:57540"/>
    </ligand>
</feature>
<feature type="binding site" evidence="2">
    <location>
        <position position="29"/>
    </location>
    <ligand>
        <name>NAD(+)</name>
        <dbReference type="ChEBI" id="CHEBI:57540"/>
    </ligand>
</feature>
<feature type="binding site" evidence="2">
    <location>
        <position position="34"/>
    </location>
    <ligand>
        <name>NAD(+)</name>
        <dbReference type="ChEBI" id="CHEBI:57540"/>
    </ligand>
</feature>
<feature type="binding site" evidence="2">
    <location>
        <position position="83"/>
    </location>
    <ligand>
        <name>NAD(+)</name>
        <dbReference type="ChEBI" id="CHEBI:57540"/>
    </ligand>
</feature>
<feature type="binding site" evidence="2">
    <location>
        <position position="118"/>
    </location>
    <ligand>
        <name>NAD(+)</name>
        <dbReference type="ChEBI" id="CHEBI:57540"/>
    </ligand>
</feature>
<feature type="binding site" evidence="2">
    <location>
        <begin position="141"/>
        <end position="145"/>
    </location>
    <ligand>
        <name>substrate</name>
    </ligand>
</feature>
<feature type="binding site" evidence="2">
    <location>
        <position position="145"/>
    </location>
    <ligand>
        <name>NAD(+)</name>
        <dbReference type="ChEBI" id="CHEBI:57540"/>
    </ligand>
</feature>
<feature type="binding site" evidence="2">
    <location>
        <position position="204"/>
    </location>
    <ligand>
        <name>substrate</name>
    </ligand>
</feature>
<feature type="binding site" evidence="2">
    <location>
        <position position="208"/>
    </location>
    <ligand>
        <name>substrate</name>
    </ligand>
</feature>
<feature type="binding site" evidence="2">
    <location>
        <begin position="249"/>
        <end position="253"/>
    </location>
    <ligand>
        <name>substrate</name>
    </ligand>
</feature>
<feature type="binding site" evidence="2">
    <location>
        <position position="257"/>
    </location>
    <ligand>
        <name>substrate</name>
    </ligand>
</feature>
<feature type="binding site" evidence="2">
    <location>
        <position position="259"/>
    </location>
    <ligand>
        <name>NAD(+)</name>
        <dbReference type="ChEBI" id="CHEBI:57540"/>
    </ligand>
</feature>
<feature type="binding site" evidence="2">
    <location>
        <position position="263"/>
    </location>
    <ligand>
        <name>NAD(+)</name>
        <dbReference type="ChEBI" id="CHEBI:57540"/>
    </ligand>
</feature>
<feature type="binding site" evidence="2">
    <location>
        <position position="320"/>
    </location>
    <ligand>
        <name>substrate</name>
    </ligand>
</feature>
<feature type="binding site" evidence="2">
    <location>
        <position position="327"/>
    </location>
    <ligand>
        <name>NAD(+)</name>
        <dbReference type="ChEBI" id="CHEBI:57540"/>
    </ligand>
</feature>
<protein>
    <recommendedName>
        <fullName>UDP-glucose 6-dehydrogenase</fullName>
        <shortName>UDP-Glc dehydrogenase</shortName>
        <shortName>UDP-GlcDH</shortName>
        <shortName>UDPGDH</shortName>
        <ecNumber>1.1.1.22</ecNumber>
    </recommendedName>
</protein>
<evidence type="ECO:0000250" key="1"/>
<evidence type="ECO:0000250" key="2">
    <source>
        <dbReference type="UniProtKB" id="Q0P8H3"/>
    </source>
</evidence>
<evidence type="ECO:0000255" key="3"/>
<evidence type="ECO:0000305" key="4"/>
<dbReference type="EC" id="1.1.1.22"/>
<dbReference type="EMBL" id="AE009949">
    <property type="protein sequence ID" value="AAL98668.1"/>
    <property type="molecule type" value="Genomic_DNA"/>
</dbReference>
<dbReference type="PIR" id="A46089">
    <property type="entry name" value="A46089"/>
</dbReference>
<dbReference type="RefSeq" id="WP_011018341.1">
    <property type="nucleotide sequence ID" value="NC_003485.1"/>
</dbReference>
<dbReference type="SMR" id="Q8NKX0"/>
<dbReference type="KEGG" id="spm:spyM18_2237"/>
<dbReference type="HOGENOM" id="CLU_023810_2_0_9"/>
<dbReference type="UniPathway" id="UPA00038">
    <property type="reaction ID" value="UER00491"/>
</dbReference>
<dbReference type="GO" id="GO:0051287">
    <property type="term" value="F:NAD binding"/>
    <property type="evidence" value="ECO:0000250"/>
    <property type="project" value="UniProtKB"/>
</dbReference>
<dbReference type="GO" id="GO:0003979">
    <property type="term" value="F:UDP-glucose 6-dehydrogenase activity"/>
    <property type="evidence" value="ECO:0000250"/>
    <property type="project" value="UniProtKB"/>
</dbReference>
<dbReference type="GO" id="GO:0000271">
    <property type="term" value="P:polysaccharide biosynthetic process"/>
    <property type="evidence" value="ECO:0007669"/>
    <property type="project" value="InterPro"/>
</dbReference>
<dbReference type="GO" id="GO:0006065">
    <property type="term" value="P:UDP-glucuronate biosynthetic process"/>
    <property type="evidence" value="ECO:0007669"/>
    <property type="project" value="UniProtKB-UniPathway"/>
</dbReference>
<dbReference type="FunFam" id="3.40.50.720:FF:000400">
    <property type="entry name" value="UDP-glucose 6-dehydrogenase"/>
    <property type="match status" value="1"/>
</dbReference>
<dbReference type="Gene3D" id="1.10.1040.10">
    <property type="entry name" value="N-(1-d-carboxylethyl)-l-norvaline Dehydrogenase, domain 2"/>
    <property type="match status" value="1"/>
</dbReference>
<dbReference type="Gene3D" id="3.40.50.720">
    <property type="entry name" value="NAD(P)-binding Rossmann-like Domain"/>
    <property type="match status" value="2"/>
</dbReference>
<dbReference type="InterPro" id="IPR008927">
    <property type="entry name" value="6-PGluconate_DH-like_C_sf"/>
</dbReference>
<dbReference type="InterPro" id="IPR013328">
    <property type="entry name" value="6PGD_dom2"/>
</dbReference>
<dbReference type="InterPro" id="IPR036291">
    <property type="entry name" value="NAD(P)-bd_dom_sf"/>
</dbReference>
<dbReference type="InterPro" id="IPR017476">
    <property type="entry name" value="UDP-Glc/GDP-Man"/>
</dbReference>
<dbReference type="InterPro" id="IPR014027">
    <property type="entry name" value="UDP-Glc/GDP-Man_DH_C"/>
</dbReference>
<dbReference type="InterPro" id="IPR036220">
    <property type="entry name" value="UDP-Glc/GDP-Man_DH_C_sf"/>
</dbReference>
<dbReference type="InterPro" id="IPR014026">
    <property type="entry name" value="UDP-Glc/GDP-Man_DH_dimer"/>
</dbReference>
<dbReference type="InterPro" id="IPR001732">
    <property type="entry name" value="UDP-Glc/GDP-Man_DH_N"/>
</dbReference>
<dbReference type="InterPro" id="IPR028357">
    <property type="entry name" value="UDPglc_DH_bac"/>
</dbReference>
<dbReference type="NCBIfam" id="TIGR03026">
    <property type="entry name" value="NDP-sugDHase"/>
    <property type="match status" value="1"/>
</dbReference>
<dbReference type="PANTHER" id="PTHR43750:SF2">
    <property type="entry name" value="UDP-GLUCOSE 6-DEHYDROGENASE"/>
    <property type="match status" value="1"/>
</dbReference>
<dbReference type="PANTHER" id="PTHR43750">
    <property type="entry name" value="UDP-GLUCOSE 6-DEHYDROGENASE TUAD"/>
    <property type="match status" value="1"/>
</dbReference>
<dbReference type="Pfam" id="PF00984">
    <property type="entry name" value="UDPG_MGDP_dh"/>
    <property type="match status" value="1"/>
</dbReference>
<dbReference type="Pfam" id="PF03720">
    <property type="entry name" value="UDPG_MGDP_dh_C"/>
    <property type="match status" value="1"/>
</dbReference>
<dbReference type="Pfam" id="PF03721">
    <property type="entry name" value="UDPG_MGDP_dh_N"/>
    <property type="match status" value="1"/>
</dbReference>
<dbReference type="PIRSF" id="PIRSF500134">
    <property type="entry name" value="UDPglc_DH_bac"/>
    <property type="match status" value="1"/>
</dbReference>
<dbReference type="PIRSF" id="PIRSF000124">
    <property type="entry name" value="UDPglc_GDPman_dh"/>
    <property type="match status" value="1"/>
</dbReference>
<dbReference type="SMART" id="SM00984">
    <property type="entry name" value="UDPG_MGDP_dh_C"/>
    <property type="match status" value="1"/>
</dbReference>
<dbReference type="SUPFAM" id="SSF48179">
    <property type="entry name" value="6-phosphogluconate dehydrogenase C-terminal domain-like"/>
    <property type="match status" value="1"/>
</dbReference>
<dbReference type="SUPFAM" id="SSF51735">
    <property type="entry name" value="NAD(P)-binding Rossmann-fold domains"/>
    <property type="match status" value="1"/>
</dbReference>
<dbReference type="SUPFAM" id="SSF52413">
    <property type="entry name" value="UDP-glucose/GDP-mannose dehydrogenase C-terminal domain"/>
    <property type="match status" value="1"/>
</dbReference>
<reference key="1">
    <citation type="journal article" date="2002" name="Proc. Natl. Acad. Sci. U.S.A.">
        <title>Genome sequence and comparative microarray analysis of serotype M18 group A Streptococcus strains associated with acute rheumatic fever outbreaks.</title>
        <authorList>
            <person name="Smoot J.C."/>
            <person name="Barbian K.D."/>
            <person name="Van Gompel J.J."/>
            <person name="Smoot L.M."/>
            <person name="Chaussee M.S."/>
            <person name="Sylva G.L."/>
            <person name="Sturdevant D.E."/>
            <person name="Ricklefs S.M."/>
            <person name="Porcella S.F."/>
            <person name="Parkins L.D."/>
            <person name="Beres S.B."/>
            <person name="Campbell D.S."/>
            <person name="Smith T.M."/>
            <person name="Zhang Q."/>
            <person name="Kapur V."/>
            <person name="Daly J.A."/>
            <person name="Veasy L.G."/>
            <person name="Musser J.M."/>
        </authorList>
    </citation>
    <scope>NUCLEOTIDE SEQUENCE [LARGE SCALE GENOMIC DNA]</scope>
    <source>
        <strain>MGAS8232</strain>
    </source>
</reference>
<comment type="function">
    <text evidence="1">Catalyzes the formation of UDP-glucuronic acid which is required for capsular hyaluronic acid synthesis.</text>
</comment>
<comment type="catalytic activity">
    <reaction>
        <text>UDP-alpha-D-glucose + 2 NAD(+) + H2O = UDP-alpha-D-glucuronate + 2 NADH + 3 H(+)</text>
        <dbReference type="Rhea" id="RHEA:23596"/>
        <dbReference type="ChEBI" id="CHEBI:15377"/>
        <dbReference type="ChEBI" id="CHEBI:15378"/>
        <dbReference type="ChEBI" id="CHEBI:57540"/>
        <dbReference type="ChEBI" id="CHEBI:57945"/>
        <dbReference type="ChEBI" id="CHEBI:58052"/>
        <dbReference type="ChEBI" id="CHEBI:58885"/>
        <dbReference type="EC" id="1.1.1.22"/>
    </reaction>
</comment>
<comment type="pathway">
    <text>Nucleotide-sugar biosynthesis; UDP-alpha-D-glucuronate biosynthesis; UDP-alpha-D-glucuronate from UDP-alpha-D-glucose: step 1/1.</text>
</comment>
<comment type="similarity">
    <text evidence="4">Belongs to the UDP-glucose/GDP-mannose dehydrogenase family.</text>
</comment>
<organism>
    <name type="scientific">Streptococcus pyogenes serotype M18 (strain MGAS8232)</name>
    <dbReference type="NCBI Taxonomy" id="186103"/>
    <lineage>
        <taxon>Bacteria</taxon>
        <taxon>Bacillati</taxon>
        <taxon>Bacillota</taxon>
        <taxon>Bacilli</taxon>
        <taxon>Lactobacillales</taxon>
        <taxon>Streptococcaceae</taxon>
        <taxon>Streptococcus</taxon>
    </lineage>
</organism>
<accession>Q8NKX0</accession>
<proteinExistence type="inferred from homology"/>
<gene>
    <name type="primary">hasB</name>
    <name type="ordered locus">spyM18_2237</name>
</gene>
<keyword id="KW-0972">Capsule biogenesis/degradation</keyword>
<keyword id="KW-0520">NAD</keyword>
<keyword id="KW-0560">Oxidoreductase</keyword>